<name>MED15_KLULA</name>
<feature type="chain" id="PRO_0000087425" description="Mediator of RNA polymerase II transcription subunit 15">
    <location>
        <begin position="1"/>
        <end position="1034"/>
    </location>
</feature>
<feature type="region of interest" description="Disordered" evidence="2">
    <location>
        <begin position="101"/>
        <end position="124"/>
    </location>
</feature>
<feature type="region of interest" description="Disordered" evidence="2">
    <location>
        <begin position="138"/>
        <end position="183"/>
    </location>
</feature>
<feature type="region of interest" description="Disordered" evidence="2">
    <location>
        <begin position="281"/>
        <end position="315"/>
    </location>
</feature>
<feature type="region of interest" description="Disordered" evidence="2">
    <location>
        <begin position="413"/>
        <end position="497"/>
    </location>
</feature>
<feature type="region of interest" description="Disordered" evidence="2">
    <location>
        <begin position="655"/>
        <end position="682"/>
    </location>
</feature>
<feature type="region of interest" description="Disordered" evidence="2">
    <location>
        <begin position="712"/>
        <end position="804"/>
    </location>
</feature>
<feature type="region of interest" description="Disordered" evidence="2">
    <location>
        <begin position="951"/>
        <end position="1020"/>
    </location>
</feature>
<feature type="compositionally biased region" description="Low complexity" evidence="2">
    <location>
        <begin position="101"/>
        <end position="123"/>
    </location>
</feature>
<feature type="compositionally biased region" description="Low complexity" evidence="2">
    <location>
        <begin position="138"/>
        <end position="149"/>
    </location>
</feature>
<feature type="compositionally biased region" description="Low complexity" evidence="2">
    <location>
        <begin position="157"/>
        <end position="183"/>
    </location>
</feature>
<feature type="compositionally biased region" description="Low complexity" evidence="2">
    <location>
        <begin position="281"/>
        <end position="312"/>
    </location>
</feature>
<feature type="compositionally biased region" description="Low complexity" evidence="2">
    <location>
        <begin position="413"/>
        <end position="441"/>
    </location>
</feature>
<feature type="compositionally biased region" description="Low complexity" evidence="2">
    <location>
        <begin position="459"/>
        <end position="490"/>
    </location>
</feature>
<feature type="compositionally biased region" description="Low complexity" evidence="2">
    <location>
        <begin position="655"/>
        <end position="675"/>
    </location>
</feature>
<feature type="compositionally biased region" description="Polar residues" evidence="2">
    <location>
        <begin position="738"/>
        <end position="764"/>
    </location>
</feature>
<feature type="compositionally biased region" description="Polar residues" evidence="2">
    <location>
        <begin position="772"/>
        <end position="802"/>
    </location>
</feature>
<feature type="compositionally biased region" description="Basic and acidic residues" evidence="2">
    <location>
        <begin position="962"/>
        <end position="971"/>
    </location>
</feature>
<feature type="compositionally biased region" description="Polar residues" evidence="2">
    <location>
        <begin position="998"/>
        <end position="1020"/>
    </location>
</feature>
<organism>
    <name type="scientific">Kluyveromyces lactis (strain ATCC 8585 / CBS 2359 / DSM 70799 / NBRC 1267 / NRRL Y-1140 / WM37)</name>
    <name type="common">Yeast</name>
    <name type="synonym">Candida sphaerica</name>
    <dbReference type="NCBI Taxonomy" id="284590"/>
    <lineage>
        <taxon>Eukaryota</taxon>
        <taxon>Fungi</taxon>
        <taxon>Dikarya</taxon>
        <taxon>Ascomycota</taxon>
        <taxon>Saccharomycotina</taxon>
        <taxon>Saccharomycetes</taxon>
        <taxon>Saccharomycetales</taxon>
        <taxon>Saccharomycetaceae</taxon>
        <taxon>Kluyveromyces</taxon>
    </lineage>
</organism>
<reference key="1">
    <citation type="journal article" date="1991" name="Nucleic Acids Res.">
        <title>Sequence conservation in the Saccharomyces and Kluveromyces GAL11 transcription activators suggests functional domains.</title>
        <authorList>
            <person name="Dickson R.C."/>
            <person name="Hopper J.E."/>
            <person name="Mylin L.M."/>
            <person name="Gerardot C.J."/>
        </authorList>
    </citation>
    <scope>NUCLEOTIDE SEQUENCE [GENOMIC DNA]</scope>
    <scope>FUNCTION</scope>
</reference>
<reference key="2">
    <citation type="journal article" date="2004" name="Nature">
        <title>Genome evolution in yeasts.</title>
        <authorList>
            <person name="Dujon B."/>
            <person name="Sherman D."/>
            <person name="Fischer G."/>
            <person name="Durrens P."/>
            <person name="Casaregola S."/>
            <person name="Lafontaine I."/>
            <person name="de Montigny J."/>
            <person name="Marck C."/>
            <person name="Neuveglise C."/>
            <person name="Talla E."/>
            <person name="Goffard N."/>
            <person name="Frangeul L."/>
            <person name="Aigle M."/>
            <person name="Anthouard V."/>
            <person name="Babour A."/>
            <person name="Barbe V."/>
            <person name="Barnay S."/>
            <person name="Blanchin S."/>
            <person name="Beckerich J.-M."/>
            <person name="Beyne E."/>
            <person name="Bleykasten C."/>
            <person name="Boisrame A."/>
            <person name="Boyer J."/>
            <person name="Cattolico L."/>
            <person name="Confanioleri F."/>
            <person name="de Daruvar A."/>
            <person name="Despons L."/>
            <person name="Fabre E."/>
            <person name="Fairhead C."/>
            <person name="Ferry-Dumazet H."/>
            <person name="Groppi A."/>
            <person name="Hantraye F."/>
            <person name="Hennequin C."/>
            <person name="Jauniaux N."/>
            <person name="Joyet P."/>
            <person name="Kachouri R."/>
            <person name="Kerrest A."/>
            <person name="Koszul R."/>
            <person name="Lemaire M."/>
            <person name="Lesur I."/>
            <person name="Ma L."/>
            <person name="Muller H."/>
            <person name="Nicaud J.-M."/>
            <person name="Nikolski M."/>
            <person name="Oztas S."/>
            <person name="Ozier-Kalogeropoulos O."/>
            <person name="Pellenz S."/>
            <person name="Potier S."/>
            <person name="Richard G.-F."/>
            <person name="Straub M.-L."/>
            <person name="Suleau A."/>
            <person name="Swennen D."/>
            <person name="Tekaia F."/>
            <person name="Wesolowski-Louvel M."/>
            <person name="Westhof E."/>
            <person name="Wirth B."/>
            <person name="Zeniou-Meyer M."/>
            <person name="Zivanovic Y."/>
            <person name="Bolotin-Fukuhara M."/>
            <person name="Thierry A."/>
            <person name="Bouchier C."/>
            <person name="Caudron B."/>
            <person name="Scarpelli C."/>
            <person name="Gaillardin C."/>
            <person name="Weissenbach J."/>
            <person name="Wincker P."/>
            <person name="Souciet J.-L."/>
        </authorList>
    </citation>
    <scope>NUCLEOTIDE SEQUENCE [LARGE SCALE GENOMIC DNA]</scope>
    <source>
        <strain>ATCC 8585 / CBS 2359 / DSM 70799 / NBRC 1267 / NRRL Y-1140 / WM37</strain>
    </source>
</reference>
<dbReference type="EMBL" id="M68870">
    <property type="protein sequence ID" value="AAA35254.1"/>
    <property type="status" value="ALT_INIT"/>
    <property type="molecule type" value="Genomic_DNA"/>
</dbReference>
<dbReference type="EMBL" id="CR382126">
    <property type="protein sequence ID" value="CAG98131.1"/>
    <property type="molecule type" value="Genomic_DNA"/>
</dbReference>
<dbReference type="PIR" id="S19033">
    <property type="entry name" value="S19033"/>
</dbReference>
<dbReference type="RefSeq" id="XP_455423.1">
    <property type="nucleotide sequence ID" value="XM_455423.1"/>
</dbReference>
<dbReference type="SMR" id="P32257"/>
<dbReference type="FunCoup" id="P32257">
    <property type="interactions" value="266"/>
</dbReference>
<dbReference type="STRING" id="284590.P32257"/>
<dbReference type="PaxDb" id="284590-P32257"/>
<dbReference type="KEGG" id="kla:KLLA0_F07579g"/>
<dbReference type="eggNOG" id="ENOG502QVXD">
    <property type="taxonomic scope" value="Eukaryota"/>
</dbReference>
<dbReference type="HOGENOM" id="CLU_009962_0_0_1"/>
<dbReference type="InParanoid" id="P32257"/>
<dbReference type="OMA" id="RYQKYYE"/>
<dbReference type="Proteomes" id="UP000000598">
    <property type="component" value="Chromosome F"/>
</dbReference>
<dbReference type="GO" id="GO:0016592">
    <property type="term" value="C:mediator complex"/>
    <property type="evidence" value="ECO:0007669"/>
    <property type="project" value="InterPro"/>
</dbReference>
<dbReference type="GO" id="GO:0003712">
    <property type="term" value="F:transcription coregulator activity"/>
    <property type="evidence" value="ECO:0007669"/>
    <property type="project" value="InterPro"/>
</dbReference>
<dbReference type="GO" id="GO:0006357">
    <property type="term" value="P:regulation of transcription by RNA polymerase II"/>
    <property type="evidence" value="ECO:0007669"/>
    <property type="project" value="InterPro"/>
</dbReference>
<dbReference type="CDD" id="cd12191">
    <property type="entry name" value="gal11_coact"/>
    <property type="match status" value="1"/>
</dbReference>
<dbReference type="Gene3D" id="1.10.246.20">
    <property type="entry name" value="Coactivator CBP, KIX domain"/>
    <property type="match status" value="1"/>
</dbReference>
<dbReference type="InterPro" id="IPR033789">
    <property type="entry name" value="Gal11_coact"/>
</dbReference>
<dbReference type="InterPro" id="IPR036529">
    <property type="entry name" value="KIX_dom_sf"/>
</dbReference>
<dbReference type="InterPro" id="IPR036546">
    <property type="entry name" value="MED15_KIX"/>
</dbReference>
<dbReference type="InterPro" id="IPR008626">
    <property type="entry name" value="Mediator_Med15_fun"/>
</dbReference>
<dbReference type="Pfam" id="PF18535">
    <property type="entry name" value="Gal11_ABD1"/>
    <property type="match status" value="1"/>
</dbReference>
<dbReference type="Pfam" id="PF16987">
    <property type="entry name" value="KIX_2"/>
    <property type="match status" value="1"/>
</dbReference>
<dbReference type="Pfam" id="PF05397">
    <property type="entry name" value="Med15_fungi"/>
    <property type="match status" value="1"/>
</dbReference>
<dbReference type="SUPFAM" id="SSF47040">
    <property type="entry name" value="Kix domain of CBP (creb binding protein)"/>
    <property type="match status" value="1"/>
</dbReference>
<protein>
    <recommendedName>
        <fullName>Mediator of RNA polymerase II transcription subunit 15</fullName>
    </recommendedName>
    <alternativeName>
        <fullName>Mediator complex subunit 15</fullName>
    </alternativeName>
    <alternativeName>
        <fullName>Transcription regulatory protein GAL11</fullName>
    </alternativeName>
</protein>
<sequence length="1034" mass="117855">MDDWRSTISTQERSQFVTELAQILADMSRINGGEKANFNLEKLKKSAEQFESSLYASCNSKDLYLDAMRKRIAAMDSAKRKSIEAQRQKLAQAQAQAQAVQRQQQQQQQQHHMQQQGSGQQQANGIPANINAQMFLNQQAQARQQAQRQIRSTLTGQQQQQPMPQQPQPQQQQPNMMRPQLTLQQQQQLANELKVTEIPRELLQKIPNLPPGITTWPQITFWAQKNRPSQNDLIITKKVYQLHQQLLNKSKLQQSNVNRMNTSVQQPGMGVQQSPNQRMNMNQVPQQQQQVRQQQQQQQQQQQQQHKQQPQHQEPPAVLGRLNQVFTQAEQKMLYEAGKKMIENLQRSGKLPPNLDSQQQLLYIKKYMNQMVLKKMQQLGIPIPMPGSAQQQSQLLQQQQQQQQQQQQQQRQQQIPQVQQAPLQQPQVQPPQSQQAQSRRQAMGMKPTPVIPNAGVMKPQPQQTPQNIQQPMMQQQSSPPPQQQQQQQQQSKISVPRPTEQDMLALKKLNAEVTKNPVKLNDITNRLTNDQKQQIRSKLHANQQLFSSVESFIPTLYMLTRNEEHIRQLLQIRMLTREIMEKAVRGVFLVEPNVVDKVIFRYQKYYEYTKEQLLRRQQQLMTMRQMQNNNPNLTANDLLNQQQLLQNRKLNLAMQSQTQEPPQIAAQQQQPQQPISGVNNNSNMGIVLDSSLNATSRSGTNTMEFLNSPEFSAISPAVPSPNKDKKNPATRAVKGKKNSQSGIPTSNPQSNSNASVVNSRTATPTVIPGSSPMFNNKSLASGQQNSPSPKTMINSPPQQDNPYKNDELALKKMAIRTAELMSRYKHRKEVFVMSSIDLFLSTFADCLDIKDDAVDLVHKTPQPILDQINGTGKKKLSKAAQKARDQDPVEISVRNNKLLMPSKSEKTLRSFKIPIADITACFKPFADPKQLILNSTPKHDEKKRKFDDLEISPTDSSSELMSESKKVKFDSPDDMFLNDPSSVQETKPLVPSELGMYSINSKPSIPSSAGNMPAPNESTDSGMNIWDWNYWESL</sequence>
<gene>
    <name type="primary">GAL11</name>
    <name type="synonym">MED15</name>
    <name type="ordered locus">KLLA0F07579g</name>
</gene>
<proteinExistence type="inferred from homology"/>
<keyword id="KW-0010">Activator</keyword>
<keyword id="KW-0539">Nucleus</keyword>
<keyword id="KW-1185">Reference proteome</keyword>
<keyword id="KW-0804">Transcription</keyword>
<keyword id="KW-0805">Transcription regulation</keyword>
<evidence type="ECO:0000250" key="1"/>
<evidence type="ECO:0000256" key="2">
    <source>
        <dbReference type="SAM" id="MobiDB-lite"/>
    </source>
</evidence>
<evidence type="ECO:0000269" key="3">
    <source>
    </source>
</evidence>
<evidence type="ECO:0000305" key="4"/>
<accession>P32257</accession>
<accession>Q6CKW6</accession>
<comment type="function">
    <text evidence="1 3">Component of the Mediator complex, a coactivator involved in the regulated transcription of nearly all RNA polymerase II-dependent genes. Mediator functions as a bridge to convey information from gene-specific regulatory proteins to the basal RNA polymerase II transcription machinery. Mediator is recruited to promoters by direct interactions with regulatory proteins and serves as a scaffold for the assembly of a functional preinitiation complex with RNA polymerase II and the general transcription factors (By similarity). Required for transcription of genes encoding galactose-metabolizing enzymes. Essential for normal growth on nonfermentable carbon sources, for sporulation and mating.</text>
</comment>
<comment type="subunit">
    <text evidence="1">Component of the Mediator complex.</text>
</comment>
<comment type="subcellular location">
    <subcellularLocation>
        <location evidence="1">Nucleus</location>
    </subcellularLocation>
</comment>
<comment type="miscellaneous">
    <text>GAL11 lacks a DNA-domain, it probably complexes with GAL4 that has the capacity to bind DNA. Association between GAL11 and GAL4 may serve to expedite phosphorylation of GAL4.</text>
</comment>
<comment type="similarity">
    <text evidence="4">Belongs to the Mediator complex subunit 15 family.</text>
</comment>
<comment type="sequence caution" evidence="4">
    <conflict type="erroneous initiation">
        <sequence resource="EMBL-CDS" id="AAA35254"/>
    </conflict>
</comment>